<evidence type="ECO:0000255" key="1">
    <source>
        <dbReference type="HAMAP-Rule" id="MF_00532"/>
    </source>
</evidence>
<evidence type="ECO:0000256" key="2">
    <source>
        <dbReference type="SAM" id="MobiDB-lite"/>
    </source>
</evidence>
<evidence type="ECO:0000305" key="3"/>
<protein>
    <recommendedName>
        <fullName evidence="1">Small ribosomal subunit protein uS9</fullName>
    </recommendedName>
    <alternativeName>
        <fullName evidence="3">30S ribosomal protein S9</fullName>
    </alternativeName>
</protein>
<keyword id="KW-0687">Ribonucleoprotein</keyword>
<keyword id="KW-0689">Ribosomal protein</keyword>
<organism>
    <name type="scientific">Dehalococcoides mccartyi (strain CBDB1)</name>
    <dbReference type="NCBI Taxonomy" id="255470"/>
    <lineage>
        <taxon>Bacteria</taxon>
        <taxon>Bacillati</taxon>
        <taxon>Chloroflexota</taxon>
        <taxon>Dehalococcoidia</taxon>
        <taxon>Dehalococcoidales</taxon>
        <taxon>Dehalococcoidaceae</taxon>
        <taxon>Dehalococcoides</taxon>
    </lineage>
</organism>
<name>RS9_DEHMC</name>
<feature type="chain" id="PRO_1000081815" description="Small ribosomal subunit protein uS9">
    <location>
        <begin position="1"/>
        <end position="132"/>
    </location>
</feature>
<feature type="region of interest" description="Disordered" evidence="2">
    <location>
        <begin position="103"/>
        <end position="132"/>
    </location>
</feature>
<feature type="compositionally biased region" description="Basic residues" evidence="2">
    <location>
        <begin position="114"/>
        <end position="132"/>
    </location>
</feature>
<dbReference type="EMBL" id="AJ965256">
    <property type="protein sequence ID" value="CAI82671.1"/>
    <property type="molecule type" value="Genomic_DNA"/>
</dbReference>
<dbReference type="RefSeq" id="WP_011309024.1">
    <property type="nucleotide sequence ID" value="NC_007356.1"/>
</dbReference>
<dbReference type="SMR" id="Q3ZZP2"/>
<dbReference type="KEGG" id="deh:cbdbA470"/>
<dbReference type="HOGENOM" id="CLU_046483_2_1_0"/>
<dbReference type="Proteomes" id="UP000000433">
    <property type="component" value="Chromosome"/>
</dbReference>
<dbReference type="GO" id="GO:0022627">
    <property type="term" value="C:cytosolic small ribosomal subunit"/>
    <property type="evidence" value="ECO:0007669"/>
    <property type="project" value="TreeGrafter"/>
</dbReference>
<dbReference type="GO" id="GO:0003723">
    <property type="term" value="F:RNA binding"/>
    <property type="evidence" value="ECO:0007669"/>
    <property type="project" value="TreeGrafter"/>
</dbReference>
<dbReference type="GO" id="GO:0003735">
    <property type="term" value="F:structural constituent of ribosome"/>
    <property type="evidence" value="ECO:0007669"/>
    <property type="project" value="InterPro"/>
</dbReference>
<dbReference type="GO" id="GO:0006412">
    <property type="term" value="P:translation"/>
    <property type="evidence" value="ECO:0007669"/>
    <property type="project" value="UniProtKB-UniRule"/>
</dbReference>
<dbReference type="FunFam" id="3.30.230.10:FF:000001">
    <property type="entry name" value="30S ribosomal protein S9"/>
    <property type="match status" value="1"/>
</dbReference>
<dbReference type="Gene3D" id="3.30.230.10">
    <property type="match status" value="1"/>
</dbReference>
<dbReference type="HAMAP" id="MF_00532_B">
    <property type="entry name" value="Ribosomal_uS9_B"/>
    <property type="match status" value="1"/>
</dbReference>
<dbReference type="InterPro" id="IPR020568">
    <property type="entry name" value="Ribosomal_Su5_D2-typ_SF"/>
</dbReference>
<dbReference type="InterPro" id="IPR000754">
    <property type="entry name" value="Ribosomal_uS9"/>
</dbReference>
<dbReference type="InterPro" id="IPR023035">
    <property type="entry name" value="Ribosomal_uS9_bac/plastid"/>
</dbReference>
<dbReference type="InterPro" id="IPR020574">
    <property type="entry name" value="Ribosomal_uS9_CS"/>
</dbReference>
<dbReference type="InterPro" id="IPR014721">
    <property type="entry name" value="Ribsml_uS5_D2-typ_fold_subgr"/>
</dbReference>
<dbReference type="NCBIfam" id="NF001099">
    <property type="entry name" value="PRK00132.1"/>
    <property type="match status" value="1"/>
</dbReference>
<dbReference type="PANTHER" id="PTHR21569">
    <property type="entry name" value="RIBOSOMAL PROTEIN S9"/>
    <property type="match status" value="1"/>
</dbReference>
<dbReference type="PANTHER" id="PTHR21569:SF1">
    <property type="entry name" value="SMALL RIBOSOMAL SUBUNIT PROTEIN US9M"/>
    <property type="match status" value="1"/>
</dbReference>
<dbReference type="Pfam" id="PF00380">
    <property type="entry name" value="Ribosomal_S9"/>
    <property type="match status" value="1"/>
</dbReference>
<dbReference type="SUPFAM" id="SSF54211">
    <property type="entry name" value="Ribosomal protein S5 domain 2-like"/>
    <property type="match status" value="1"/>
</dbReference>
<dbReference type="PROSITE" id="PS00360">
    <property type="entry name" value="RIBOSOMAL_S9"/>
    <property type="match status" value="1"/>
</dbReference>
<proteinExistence type="inferred from homology"/>
<sequence length="132" mass="14550">MVEKNTYFIGVGRRKTAVATVKLMSGNGVIVIDGKPIEERFTRIQERNVILNPMMVTDTMGKFNAVIKVLGGGVTGQSGAIAHGIARALEKTDEKLRAALKSNGLLTRDDRTKERKKPGLKRARKAPQYTKR</sequence>
<accession>Q3ZZP2</accession>
<gene>
    <name evidence="1" type="primary">rpsI</name>
    <name type="ordered locus">cbdbA470</name>
</gene>
<comment type="similarity">
    <text evidence="1">Belongs to the universal ribosomal protein uS9 family.</text>
</comment>
<reference key="1">
    <citation type="journal article" date="2005" name="Nat. Biotechnol.">
        <title>Genome sequence of the chlorinated compound-respiring bacterium Dehalococcoides species strain CBDB1.</title>
        <authorList>
            <person name="Kube M."/>
            <person name="Beck A."/>
            <person name="Zinder S.H."/>
            <person name="Kuhl H."/>
            <person name="Reinhardt R."/>
            <person name="Adrian L."/>
        </authorList>
    </citation>
    <scope>NUCLEOTIDE SEQUENCE [LARGE SCALE GENOMIC DNA]</scope>
    <source>
        <strain>CBDB1</strain>
    </source>
</reference>